<gene>
    <name evidence="1" type="primary">hisI</name>
    <name type="ordered locus">Pput_4888</name>
</gene>
<comment type="function">
    <text evidence="1">Catalyzes the hydrolysis of the adenine ring of phosphoribosyl-AMP.</text>
</comment>
<comment type="catalytic activity">
    <reaction evidence="1">
        <text>1-(5-phospho-beta-D-ribosyl)-5'-AMP + H2O = 1-(5-phospho-beta-D-ribosyl)-5-[(5-phospho-beta-D-ribosylamino)methylideneamino]imidazole-4-carboxamide</text>
        <dbReference type="Rhea" id="RHEA:20049"/>
        <dbReference type="ChEBI" id="CHEBI:15377"/>
        <dbReference type="ChEBI" id="CHEBI:58435"/>
        <dbReference type="ChEBI" id="CHEBI:59457"/>
        <dbReference type="EC" id="3.5.4.19"/>
    </reaction>
</comment>
<comment type="cofactor">
    <cofactor evidence="1">
        <name>Mg(2+)</name>
        <dbReference type="ChEBI" id="CHEBI:18420"/>
    </cofactor>
    <text evidence="1">Binds 1 Mg(2+) ion per subunit.</text>
</comment>
<comment type="cofactor">
    <cofactor evidence="1">
        <name>Zn(2+)</name>
        <dbReference type="ChEBI" id="CHEBI:29105"/>
    </cofactor>
    <text evidence="1">Binds 1 zinc ion per subunit.</text>
</comment>
<comment type="pathway">
    <text evidence="1">Amino-acid biosynthesis; L-histidine biosynthesis; L-histidine from 5-phospho-alpha-D-ribose 1-diphosphate: step 3/9.</text>
</comment>
<comment type="subunit">
    <text evidence="1">Homodimer.</text>
</comment>
<comment type="subcellular location">
    <subcellularLocation>
        <location evidence="1">Cytoplasm</location>
    </subcellularLocation>
</comment>
<comment type="similarity">
    <text evidence="1">Belongs to the PRA-CH family.</text>
</comment>
<feature type="chain" id="PRO_1000063427" description="Phosphoribosyl-AMP cyclohydrolase">
    <location>
        <begin position="1"/>
        <end position="130"/>
    </location>
</feature>
<feature type="binding site" evidence="1">
    <location>
        <position position="77"/>
    </location>
    <ligand>
        <name>Mg(2+)</name>
        <dbReference type="ChEBI" id="CHEBI:18420"/>
    </ligand>
</feature>
<feature type="binding site" evidence="1">
    <location>
        <position position="78"/>
    </location>
    <ligand>
        <name>Zn(2+)</name>
        <dbReference type="ChEBI" id="CHEBI:29105"/>
        <note>ligand shared between dimeric partners</note>
    </ligand>
</feature>
<feature type="binding site" evidence="1">
    <location>
        <position position="79"/>
    </location>
    <ligand>
        <name>Mg(2+)</name>
        <dbReference type="ChEBI" id="CHEBI:18420"/>
    </ligand>
</feature>
<feature type="binding site" evidence="1">
    <location>
        <position position="81"/>
    </location>
    <ligand>
        <name>Mg(2+)</name>
        <dbReference type="ChEBI" id="CHEBI:18420"/>
    </ligand>
</feature>
<feature type="binding site" evidence="1">
    <location>
        <position position="95"/>
    </location>
    <ligand>
        <name>Zn(2+)</name>
        <dbReference type="ChEBI" id="CHEBI:29105"/>
        <note>ligand shared between dimeric partners</note>
    </ligand>
</feature>
<feature type="binding site" evidence="1">
    <location>
        <position position="102"/>
    </location>
    <ligand>
        <name>Zn(2+)</name>
        <dbReference type="ChEBI" id="CHEBI:29105"/>
        <note>ligand shared between dimeric partners</note>
    </ligand>
</feature>
<organism>
    <name type="scientific">Pseudomonas putida (strain ATCC 700007 / DSM 6899 / JCM 31910 / BCRC 17059 / LMG 24140 / F1)</name>
    <dbReference type="NCBI Taxonomy" id="351746"/>
    <lineage>
        <taxon>Bacteria</taxon>
        <taxon>Pseudomonadati</taxon>
        <taxon>Pseudomonadota</taxon>
        <taxon>Gammaproteobacteria</taxon>
        <taxon>Pseudomonadales</taxon>
        <taxon>Pseudomonadaceae</taxon>
        <taxon>Pseudomonas</taxon>
    </lineage>
</organism>
<evidence type="ECO:0000255" key="1">
    <source>
        <dbReference type="HAMAP-Rule" id="MF_01021"/>
    </source>
</evidence>
<accession>A5WA48</accession>
<proteinExistence type="inferred from homology"/>
<sequence>MKDWLDEIKWNSDGLVPAIAQDHKTGRVLMMAWMNRESLALTAAEQRAIYWSRSRGKLWRKGEESGHVQKLHELRLDCDADVIILMVEQLGHIACHTGRESCFYRVYEDGQWKIVDPVLKDPDAIYSAGH</sequence>
<keyword id="KW-0028">Amino-acid biosynthesis</keyword>
<keyword id="KW-0963">Cytoplasm</keyword>
<keyword id="KW-0368">Histidine biosynthesis</keyword>
<keyword id="KW-0378">Hydrolase</keyword>
<keyword id="KW-0460">Magnesium</keyword>
<keyword id="KW-0479">Metal-binding</keyword>
<keyword id="KW-0862">Zinc</keyword>
<dbReference type="EC" id="3.5.4.19" evidence="1"/>
<dbReference type="EMBL" id="CP000712">
    <property type="protein sequence ID" value="ABQ81008.1"/>
    <property type="molecule type" value="Genomic_DNA"/>
</dbReference>
<dbReference type="SMR" id="A5WA48"/>
<dbReference type="KEGG" id="ppf:Pput_4888"/>
<dbReference type="eggNOG" id="COG0139">
    <property type="taxonomic scope" value="Bacteria"/>
</dbReference>
<dbReference type="HOGENOM" id="CLU_048577_5_0_6"/>
<dbReference type="UniPathway" id="UPA00031">
    <property type="reaction ID" value="UER00008"/>
</dbReference>
<dbReference type="GO" id="GO:0005737">
    <property type="term" value="C:cytoplasm"/>
    <property type="evidence" value="ECO:0007669"/>
    <property type="project" value="UniProtKB-SubCell"/>
</dbReference>
<dbReference type="GO" id="GO:0000287">
    <property type="term" value="F:magnesium ion binding"/>
    <property type="evidence" value="ECO:0007669"/>
    <property type="project" value="UniProtKB-UniRule"/>
</dbReference>
<dbReference type="GO" id="GO:0004635">
    <property type="term" value="F:phosphoribosyl-AMP cyclohydrolase activity"/>
    <property type="evidence" value="ECO:0007669"/>
    <property type="project" value="UniProtKB-UniRule"/>
</dbReference>
<dbReference type="GO" id="GO:0008270">
    <property type="term" value="F:zinc ion binding"/>
    <property type="evidence" value="ECO:0007669"/>
    <property type="project" value="UniProtKB-UniRule"/>
</dbReference>
<dbReference type="GO" id="GO:0000105">
    <property type="term" value="P:L-histidine biosynthetic process"/>
    <property type="evidence" value="ECO:0007669"/>
    <property type="project" value="UniProtKB-UniRule"/>
</dbReference>
<dbReference type="FunFam" id="3.10.20.810:FF:000001">
    <property type="entry name" value="Histidine biosynthesis bifunctional protein HisIE"/>
    <property type="match status" value="1"/>
</dbReference>
<dbReference type="Gene3D" id="3.10.20.810">
    <property type="entry name" value="Phosphoribosyl-AMP cyclohydrolase"/>
    <property type="match status" value="1"/>
</dbReference>
<dbReference type="HAMAP" id="MF_01021">
    <property type="entry name" value="HisI"/>
    <property type="match status" value="1"/>
</dbReference>
<dbReference type="InterPro" id="IPR026660">
    <property type="entry name" value="PRA-CH"/>
</dbReference>
<dbReference type="InterPro" id="IPR002496">
    <property type="entry name" value="PRib_AMP_CycHydrolase_dom"/>
</dbReference>
<dbReference type="InterPro" id="IPR038019">
    <property type="entry name" value="PRib_AMP_CycHydrolase_sf"/>
</dbReference>
<dbReference type="NCBIfam" id="NF000768">
    <property type="entry name" value="PRK00051.1"/>
    <property type="match status" value="1"/>
</dbReference>
<dbReference type="PANTHER" id="PTHR42945">
    <property type="entry name" value="HISTIDINE BIOSYNTHESIS BIFUNCTIONAL PROTEIN"/>
    <property type="match status" value="1"/>
</dbReference>
<dbReference type="PANTHER" id="PTHR42945:SF1">
    <property type="entry name" value="HISTIDINE BIOSYNTHESIS BIFUNCTIONAL PROTEIN HIS7"/>
    <property type="match status" value="1"/>
</dbReference>
<dbReference type="Pfam" id="PF01502">
    <property type="entry name" value="PRA-CH"/>
    <property type="match status" value="1"/>
</dbReference>
<dbReference type="SUPFAM" id="SSF141734">
    <property type="entry name" value="HisI-like"/>
    <property type="match status" value="1"/>
</dbReference>
<reference key="1">
    <citation type="submission" date="2007-05" db="EMBL/GenBank/DDBJ databases">
        <title>Complete sequence of Pseudomonas putida F1.</title>
        <authorList>
            <consortium name="US DOE Joint Genome Institute"/>
            <person name="Copeland A."/>
            <person name="Lucas S."/>
            <person name="Lapidus A."/>
            <person name="Barry K."/>
            <person name="Detter J.C."/>
            <person name="Glavina del Rio T."/>
            <person name="Hammon N."/>
            <person name="Israni S."/>
            <person name="Dalin E."/>
            <person name="Tice H."/>
            <person name="Pitluck S."/>
            <person name="Chain P."/>
            <person name="Malfatti S."/>
            <person name="Shin M."/>
            <person name="Vergez L."/>
            <person name="Schmutz J."/>
            <person name="Larimer F."/>
            <person name="Land M."/>
            <person name="Hauser L."/>
            <person name="Kyrpides N."/>
            <person name="Lykidis A."/>
            <person name="Parales R."/>
            <person name="Richardson P."/>
        </authorList>
    </citation>
    <scope>NUCLEOTIDE SEQUENCE [LARGE SCALE GENOMIC DNA]</scope>
    <source>
        <strain>ATCC 700007 / DSM 6899 / JCM 31910 / BCRC 17059 / LMG 24140 / F1</strain>
    </source>
</reference>
<name>HIS3_PSEP1</name>
<protein>
    <recommendedName>
        <fullName evidence="1">Phosphoribosyl-AMP cyclohydrolase</fullName>
        <shortName evidence="1">PRA-CH</shortName>
        <ecNumber evidence="1">3.5.4.19</ecNumber>
    </recommendedName>
</protein>